<protein>
    <recommendedName>
        <fullName>Thioredoxin reductase</fullName>
        <ecNumber>1.8.1.9</ecNumber>
    </recommendedName>
    <alternativeName>
        <fullName>Caffeine resistance protein 4</fullName>
    </alternativeName>
</protein>
<evidence type="ECO:0000250" key="1">
    <source>
        <dbReference type="UniProtKB" id="P29509"/>
    </source>
</evidence>
<evidence type="ECO:0000269" key="2">
    <source>
    </source>
</evidence>
<evidence type="ECO:0000305" key="3"/>
<feature type="chain" id="PRO_0000166768" description="Thioredoxin reductase">
    <location>
        <begin position="1"/>
        <end position="322"/>
    </location>
</feature>
<feature type="binding site" evidence="1">
    <location>
        <begin position="11"/>
        <end position="14"/>
    </location>
    <ligand>
        <name>FAD</name>
        <dbReference type="ChEBI" id="CHEBI:57692"/>
    </ligand>
</feature>
<feature type="binding site" evidence="1">
    <location>
        <begin position="40"/>
        <end position="41"/>
    </location>
    <ligand>
        <name>FAD</name>
        <dbReference type="ChEBI" id="CHEBI:57692"/>
    </ligand>
</feature>
<feature type="binding site" evidence="1">
    <location>
        <position position="45"/>
    </location>
    <ligand>
        <name>FAD</name>
        <dbReference type="ChEBI" id="CHEBI:57692"/>
    </ligand>
</feature>
<feature type="binding site" evidence="1">
    <location>
        <position position="54"/>
    </location>
    <ligand>
        <name>FAD</name>
        <dbReference type="ChEBI" id="CHEBI:57692"/>
    </ligand>
</feature>
<feature type="binding site" evidence="1">
    <location>
        <position position="87"/>
    </location>
    <ligand>
        <name>FAD</name>
        <dbReference type="ChEBI" id="CHEBI:57692"/>
    </ligand>
</feature>
<feature type="binding site" evidence="1">
    <location>
        <position position="145"/>
    </location>
    <ligand>
        <name>FAD</name>
        <dbReference type="ChEBI" id="CHEBI:57692"/>
    </ligand>
</feature>
<feature type="binding site" evidence="1">
    <location>
        <position position="288"/>
    </location>
    <ligand>
        <name>FAD</name>
        <dbReference type="ChEBI" id="CHEBI:57692"/>
    </ligand>
</feature>
<feature type="binding site" evidence="1">
    <location>
        <begin position="295"/>
        <end position="297"/>
    </location>
    <ligand>
        <name>FAD</name>
        <dbReference type="ChEBI" id="CHEBI:57692"/>
    </ligand>
</feature>
<feature type="modified residue" description="Phosphoserine" evidence="2">
    <location>
        <position position="192"/>
    </location>
</feature>
<feature type="modified residue" description="Phosphothreonine" evidence="2">
    <location>
        <position position="278"/>
    </location>
</feature>
<feature type="modified residue" description="Phosphoserine" evidence="2">
    <location>
        <position position="279"/>
    </location>
</feature>
<feature type="disulfide bond" description="Redox-active" evidence="1">
    <location>
        <begin position="142"/>
        <end position="145"/>
    </location>
</feature>
<gene>
    <name type="primary">trr1</name>
    <name type="synonym">caf4</name>
    <name type="ORF">SPBC3F6.03</name>
</gene>
<accession>Q92375</accession>
<dbReference type="EC" id="1.8.1.9"/>
<dbReference type="EMBL" id="U63713">
    <property type="protein sequence ID" value="AAC49569.1"/>
    <property type="molecule type" value="Genomic_DNA"/>
</dbReference>
<dbReference type="EMBL" id="AF535134">
    <property type="protein sequence ID" value="AAN01228.1"/>
    <property type="molecule type" value="Genomic_DNA"/>
</dbReference>
<dbReference type="EMBL" id="CU329671">
    <property type="protein sequence ID" value="CAA17692.1"/>
    <property type="molecule type" value="Genomic_DNA"/>
</dbReference>
<dbReference type="PIR" id="T40393">
    <property type="entry name" value="T40393"/>
</dbReference>
<dbReference type="RefSeq" id="NP_001018848.1">
    <property type="nucleotide sequence ID" value="NM_001022668.2"/>
</dbReference>
<dbReference type="SMR" id="Q92375"/>
<dbReference type="BioGRID" id="280434">
    <property type="interactions" value="12"/>
</dbReference>
<dbReference type="FunCoup" id="Q92375">
    <property type="interactions" value="337"/>
</dbReference>
<dbReference type="STRING" id="284812.Q92375"/>
<dbReference type="iPTMnet" id="Q92375"/>
<dbReference type="PaxDb" id="4896-SPBC3F6.03.1"/>
<dbReference type="EnsemblFungi" id="SPBC3F6.03.1">
    <property type="protein sequence ID" value="SPBC3F6.03.1:pep"/>
    <property type="gene ID" value="SPBC3F6.03"/>
</dbReference>
<dbReference type="GeneID" id="3361358"/>
<dbReference type="KEGG" id="spo:3361358"/>
<dbReference type="PomBase" id="SPBC3F6.03">
    <property type="gene designation" value="trr1"/>
</dbReference>
<dbReference type="VEuPathDB" id="FungiDB:SPBC3F6.03"/>
<dbReference type="eggNOG" id="KOG0404">
    <property type="taxonomic scope" value="Eukaryota"/>
</dbReference>
<dbReference type="HOGENOM" id="CLU_031864_5_1_1"/>
<dbReference type="InParanoid" id="Q92375"/>
<dbReference type="OMA" id="GPCHVLK"/>
<dbReference type="PhylomeDB" id="Q92375"/>
<dbReference type="PRO" id="PR:Q92375"/>
<dbReference type="Proteomes" id="UP000002485">
    <property type="component" value="Chromosome II"/>
</dbReference>
<dbReference type="GO" id="GO:0005829">
    <property type="term" value="C:cytosol"/>
    <property type="evidence" value="ECO:0007005"/>
    <property type="project" value="PomBase"/>
</dbReference>
<dbReference type="GO" id="GO:0005739">
    <property type="term" value="C:mitochondrion"/>
    <property type="evidence" value="ECO:0000250"/>
    <property type="project" value="PomBase"/>
</dbReference>
<dbReference type="GO" id="GO:0005634">
    <property type="term" value="C:nucleus"/>
    <property type="evidence" value="ECO:0007005"/>
    <property type="project" value="PomBase"/>
</dbReference>
<dbReference type="GO" id="GO:0004791">
    <property type="term" value="F:thioredoxin-disulfide reductase (NADPH) activity"/>
    <property type="evidence" value="ECO:0000314"/>
    <property type="project" value="PomBase"/>
</dbReference>
<dbReference type="GO" id="GO:0045454">
    <property type="term" value="P:cell redox homeostasis"/>
    <property type="evidence" value="ECO:0000318"/>
    <property type="project" value="GO_Central"/>
</dbReference>
<dbReference type="GO" id="GO:0019430">
    <property type="term" value="P:removal of superoxide radicals"/>
    <property type="evidence" value="ECO:0007669"/>
    <property type="project" value="InterPro"/>
</dbReference>
<dbReference type="FunFam" id="3.50.50.60:FF:000064">
    <property type="entry name" value="Thioredoxin reductase"/>
    <property type="match status" value="1"/>
</dbReference>
<dbReference type="Gene3D" id="3.50.50.60">
    <property type="entry name" value="FAD/NAD(P)-binding domain"/>
    <property type="match status" value="2"/>
</dbReference>
<dbReference type="InterPro" id="IPR036188">
    <property type="entry name" value="FAD/NAD-bd_sf"/>
</dbReference>
<dbReference type="InterPro" id="IPR023753">
    <property type="entry name" value="FAD/NAD-binding_dom"/>
</dbReference>
<dbReference type="InterPro" id="IPR050097">
    <property type="entry name" value="Ferredoxin-NADP_redctase_2"/>
</dbReference>
<dbReference type="InterPro" id="IPR008255">
    <property type="entry name" value="Pyr_nucl-diS_OxRdtase_2_AS"/>
</dbReference>
<dbReference type="InterPro" id="IPR005982">
    <property type="entry name" value="Thioredox_Rdtase"/>
</dbReference>
<dbReference type="NCBIfam" id="TIGR01292">
    <property type="entry name" value="TRX_reduct"/>
    <property type="match status" value="1"/>
</dbReference>
<dbReference type="PANTHER" id="PTHR48105">
    <property type="entry name" value="THIOREDOXIN REDUCTASE 1-RELATED-RELATED"/>
    <property type="match status" value="1"/>
</dbReference>
<dbReference type="Pfam" id="PF07992">
    <property type="entry name" value="Pyr_redox_2"/>
    <property type="match status" value="1"/>
</dbReference>
<dbReference type="PRINTS" id="PR00368">
    <property type="entry name" value="FADPNR"/>
</dbReference>
<dbReference type="PRINTS" id="PR00469">
    <property type="entry name" value="PNDRDTASEII"/>
</dbReference>
<dbReference type="SUPFAM" id="SSF51905">
    <property type="entry name" value="FAD/NAD(P)-binding domain"/>
    <property type="match status" value="1"/>
</dbReference>
<dbReference type="PROSITE" id="PS00573">
    <property type="entry name" value="PYRIDINE_REDOX_2"/>
    <property type="match status" value="1"/>
</dbReference>
<name>TRXB_SCHPO</name>
<organism>
    <name type="scientific">Schizosaccharomyces pombe (strain 972 / ATCC 24843)</name>
    <name type="common">Fission yeast</name>
    <dbReference type="NCBI Taxonomy" id="284812"/>
    <lineage>
        <taxon>Eukaryota</taxon>
        <taxon>Fungi</taxon>
        <taxon>Dikarya</taxon>
        <taxon>Ascomycota</taxon>
        <taxon>Taphrinomycotina</taxon>
        <taxon>Schizosaccharomycetes</taxon>
        <taxon>Schizosaccharomycetales</taxon>
        <taxon>Schizosaccharomycetaceae</taxon>
        <taxon>Schizosaccharomyces</taxon>
    </lineage>
</organism>
<proteinExistence type="evidence at protein level"/>
<comment type="catalytic activity">
    <reaction>
        <text>[thioredoxin]-dithiol + NADP(+) = [thioredoxin]-disulfide + NADPH + H(+)</text>
        <dbReference type="Rhea" id="RHEA:20345"/>
        <dbReference type="Rhea" id="RHEA-COMP:10698"/>
        <dbReference type="Rhea" id="RHEA-COMP:10700"/>
        <dbReference type="ChEBI" id="CHEBI:15378"/>
        <dbReference type="ChEBI" id="CHEBI:29950"/>
        <dbReference type="ChEBI" id="CHEBI:50058"/>
        <dbReference type="ChEBI" id="CHEBI:57783"/>
        <dbReference type="ChEBI" id="CHEBI:58349"/>
        <dbReference type="EC" id="1.8.1.9"/>
    </reaction>
</comment>
<comment type="cofactor">
    <cofactor evidence="1">
        <name>FAD</name>
        <dbReference type="ChEBI" id="CHEBI:57692"/>
    </cofactor>
    <text evidence="1">Binds 1 FAD per subunit.</text>
</comment>
<comment type="subunit">
    <text evidence="1">Homodimer.</text>
</comment>
<comment type="subcellular location">
    <subcellularLocation>
        <location evidence="1">Cytoplasm</location>
    </subcellularLocation>
</comment>
<comment type="miscellaneous">
    <text>The active site is a redox-active disulfide bond.</text>
</comment>
<comment type="similarity">
    <text evidence="3">Belongs to the class-II pyridine nucleotide-disulfide oxidoreductase family.</text>
</comment>
<keyword id="KW-0963">Cytoplasm</keyword>
<keyword id="KW-1015">Disulfide bond</keyword>
<keyword id="KW-0274">FAD</keyword>
<keyword id="KW-0285">Flavoprotein</keyword>
<keyword id="KW-0521">NADP</keyword>
<keyword id="KW-0560">Oxidoreductase</keyword>
<keyword id="KW-0597">Phosphoprotein</keyword>
<keyword id="KW-0676">Redox-active center</keyword>
<keyword id="KW-1185">Reference proteome</keyword>
<reference key="1">
    <citation type="journal article" date="1996" name="Mol. Gen. Genet.">
        <title>A mutation in a thioredoxin reductase homolog suppresses p53-induced growth inhibition in the fission yeast Schizosaccharomyces pombe.</title>
        <authorList>
            <person name="Casso D."/>
            <person name="Beach D."/>
        </authorList>
    </citation>
    <scope>NUCLEOTIDE SEQUENCE [GENOMIC DNA]</scope>
</reference>
<reference key="2">
    <citation type="journal article" date="1998" name="Mol. Gen. Genet.">
        <title>Cloning of caf1+, caf2+ and caf4+ from Schizosaccharomyces pombe: their involvement in multidrug resistance, UV and pH sensitivity.</title>
        <authorList>
            <person name="Benko Z."/>
            <person name="Sipiczki M."/>
            <person name="Carr A.M."/>
        </authorList>
    </citation>
    <scope>NUCLEOTIDE SEQUENCE [GENOMIC DNA]</scope>
</reference>
<reference key="3">
    <citation type="submission" date="2002-08" db="EMBL/GenBank/DDBJ databases">
        <title>Molecular characterization and regulation of a gene encoding thioredoxin reductase homolog from the fission Yeast.</title>
        <authorList>
            <person name="Hong S.-M."/>
            <person name="Cho Y.-W."/>
            <person name="Lim C.-J."/>
        </authorList>
    </citation>
    <scope>NUCLEOTIDE SEQUENCE [GENOMIC DNA]</scope>
</reference>
<reference key="4">
    <citation type="journal article" date="2002" name="Nature">
        <title>The genome sequence of Schizosaccharomyces pombe.</title>
        <authorList>
            <person name="Wood V."/>
            <person name="Gwilliam R."/>
            <person name="Rajandream M.A."/>
            <person name="Lyne M.H."/>
            <person name="Lyne R."/>
            <person name="Stewart A."/>
            <person name="Sgouros J.G."/>
            <person name="Peat N."/>
            <person name="Hayles J."/>
            <person name="Baker S.G."/>
            <person name="Basham D."/>
            <person name="Bowman S."/>
            <person name="Brooks K."/>
            <person name="Brown D."/>
            <person name="Brown S."/>
            <person name="Chillingworth T."/>
            <person name="Churcher C.M."/>
            <person name="Collins M."/>
            <person name="Connor R."/>
            <person name="Cronin A."/>
            <person name="Davis P."/>
            <person name="Feltwell T."/>
            <person name="Fraser A."/>
            <person name="Gentles S."/>
            <person name="Goble A."/>
            <person name="Hamlin N."/>
            <person name="Harris D.E."/>
            <person name="Hidalgo J."/>
            <person name="Hodgson G."/>
            <person name="Holroyd S."/>
            <person name="Hornsby T."/>
            <person name="Howarth S."/>
            <person name="Huckle E.J."/>
            <person name="Hunt S."/>
            <person name="Jagels K."/>
            <person name="James K.D."/>
            <person name="Jones L."/>
            <person name="Jones M."/>
            <person name="Leather S."/>
            <person name="McDonald S."/>
            <person name="McLean J."/>
            <person name="Mooney P."/>
            <person name="Moule S."/>
            <person name="Mungall K.L."/>
            <person name="Murphy L.D."/>
            <person name="Niblett D."/>
            <person name="Odell C."/>
            <person name="Oliver K."/>
            <person name="O'Neil S."/>
            <person name="Pearson D."/>
            <person name="Quail M.A."/>
            <person name="Rabbinowitsch E."/>
            <person name="Rutherford K.M."/>
            <person name="Rutter S."/>
            <person name="Saunders D."/>
            <person name="Seeger K."/>
            <person name="Sharp S."/>
            <person name="Skelton J."/>
            <person name="Simmonds M.N."/>
            <person name="Squares R."/>
            <person name="Squares S."/>
            <person name="Stevens K."/>
            <person name="Taylor K."/>
            <person name="Taylor R.G."/>
            <person name="Tivey A."/>
            <person name="Walsh S.V."/>
            <person name="Warren T."/>
            <person name="Whitehead S."/>
            <person name="Woodward J.R."/>
            <person name="Volckaert G."/>
            <person name="Aert R."/>
            <person name="Robben J."/>
            <person name="Grymonprez B."/>
            <person name="Weltjens I."/>
            <person name="Vanstreels E."/>
            <person name="Rieger M."/>
            <person name="Schaefer M."/>
            <person name="Mueller-Auer S."/>
            <person name="Gabel C."/>
            <person name="Fuchs M."/>
            <person name="Duesterhoeft A."/>
            <person name="Fritzc C."/>
            <person name="Holzer E."/>
            <person name="Moestl D."/>
            <person name="Hilbert H."/>
            <person name="Borzym K."/>
            <person name="Langer I."/>
            <person name="Beck A."/>
            <person name="Lehrach H."/>
            <person name="Reinhardt R."/>
            <person name="Pohl T.M."/>
            <person name="Eger P."/>
            <person name="Zimmermann W."/>
            <person name="Wedler H."/>
            <person name="Wambutt R."/>
            <person name="Purnelle B."/>
            <person name="Goffeau A."/>
            <person name="Cadieu E."/>
            <person name="Dreano S."/>
            <person name="Gloux S."/>
            <person name="Lelaure V."/>
            <person name="Mottier S."/>
            <person name="Galibert F."/>
            <person name="Aves S.J."/>
            <person name="Xiang Z."/>
            <person name="Hunt C."/>
            <person name="Moore K."/>
            <person name="Hurst S.M."/>
            <person name="Lucas M."/>
            <person name="Rochet M."/>
            <person name="Gaillardin C."/>
            <person name="Tallada V.A."/>
            <person name="Garzon A."/>
            <person name="Thode G."/>
            <person name="Daga R.R."/>
            <person name="Cruzado L."/>
            <person name="Jimenez J."/>
            <person name="Sanchez M."/>
            <person name="del Rey F."/>
            <person name="Benito J."/>
            <person name="Dominguez A."/>
            <person name="Revuelta J.L."/>
            <person name="Moreno S."/>
            <person name="Armstrong J."/>
            <person name="Forsburg S.L."/>
            <person name="Cerutti L."/>
            <person name="Lowe T."/>
            <person name="McCombie W.R."/>
            <person name="Paulsen I."/>
            <person name="Potashkin J."/>
            <person name="Shpakovski G.V."/>
            <person name="Ussery D."/>
            <person name="Barrell B.G."/>
            <person name="Nurse P."/>
        </authorList>
    </citation>
    <scope>NUCLEOTIDE SEQUENCE [LARGE SCALE GENOMIC DNA]</scope>
    <source>
        <strain>972 / ATCC 24843</strain>
    </source>
</reference>
<reference key="5">
    <citation type="journal article" date="2008" name="J. Proteome Res.">
        <title>Phosphoproteome analysis of fission yeast.</title>
        <authorList>
            <person name="Wilson-Grady J.T."/>
            <person name="Villen J."/>
            <person name="Gygi S.P."/>
        </authorList>
    </citation>
    <scope>PHOSPHORYLATION [LARGE SCALE ANALYSIS] AT SER-192; THR-278 AND SER-279</scope>
    <scope>IDENTIFICATION BY MASS SPECTROMETRY</scope>
</reference>
<sequence length="322" mass="34618">MTHNKVVIIGSGPAGHTAAIYLARGELKPVMYEGMLANGIAAGGQLTTTTDVENFPGFPDGINGTTLTENFRAQSLRFGTEIITETVSKLDLSSRPFKYWLEGAEEEEPHTADSVILATGASARRLHITGEDTYWQAGISACAVCDGAVPIYRNKPLAVVGGGDSAAEEAQFLTKYGSKVYVLVRRDKLRASPIMAKRLLANPKVEVLWNTVAEEAQGDGKLLNNLRIKNTNTNEVSDLQVNGLFYAIGHIPATKLVAEQIELDEAGYIKTINGTPRTSIPGFFAAGDVQDKVFRQAITSAGSGCQAALLAMHYLEELEDTD</sequence>